<name>PPK1_PARPJ</name>
<sequence length="687" mass="77420">MSIRYPLLNRELGILGFNERVLAQAADPAVPLLERLRFICITSSNLDEFFEVRMAGLQEQMRDNPGALSPDGMSLQHVYDLVVERAQKLVHRQYTMLHDTVLTALEAEGIYFHGTEAWNEAQTEWARNYFFDELLPVLTPIGLDPAHPFPRVLNKSLNFVVELEGKDAFGRQAMMGIVQAPRALPRLVRMPQELSGYPHGFVLLSSLLQRFVGELFPNLVVRSCNQFRITRNSELFVDEDEITNLRVALQGELPARHLGNAVRLEVSAETPTHVVRRLLDESGLSDKDCYYADGPVNLVRLMQLPEMVDRPDLKFVPHIPAIPAQVANSVSMFDVIDQGDVLLHHPYESFQPVLELLLQAAKDPNVVAIKQTIYRTGTDSPLMDALMQAARNGKEVTVVVELLARFDEETNINWASQLEAVGAHVVYGVVGHKCHAKMMLIVRRVSVGGKTTLKRYVHLGTGNYHPRTARLYTDFGLMTADQKICEDVHHVFQQLTGIGGELKLHELWQSPFTLHPKLVEAIRAEAEHARAGKKARIVAKMNALLEPTVIAELYEAAQAGVKIDLIVRGVCSLQPGVAGLSENITVRSIVGRFLEHHRIFYFYDGGKEQVYLSSADWMDRNFFRRVEVAFPINNRRLKRRVIAEGLSAFLGDNQSAWLMQSDGHYRRRRPGKSSRNAQMSLLGKFCS</sequence>
<reference key="1">
    <citation type="journal article" date="2011" name="J. Bacteriol.">
        <title>Complete genome sequence of the plant growth-promoting endophyte Burkholderia phytofirmans strain PsJN.</title>
        <authorList>
            <person name="Weilharter A."/>
            <person name="Mitter B."/>
            <person name="Shin M.V."/>
            <person name="Chain P.S."/>
            <person name="Nowak J."/>
            <person name="Sessitsch A."/>
        </authorList>
    </citation>
    <scope>NUCLEOTIDE SEQUENCE [LARGE SCALE GENOMIC DNA]</scope>
    <source>
        <strain>DSM 17436 / LMG 22146 / PsJN</strain>
    </source>
</reference>
<gene>
    <name evidence="1" type="primary">ppk</name>
    <name type="ordered locus">Bphyt_2851</name>
</gene>
<evidence type="ECO:0000255" key="1">
    <source>
        <dbReference type="HAMAP-Rule" id="MF_00347"/>
    </source>
</evidence>
<keyword id="KW-0067">ATP-binding</keyword>
<keyword id="KW-0418">Kinase</keyword>
<keyword id="KW-0460">Magnesium</keyword>
<keyword id="KW-0479">Metal-binding</keyword>
<keyword id="KW-0547">Nucleotide-binding</keyword>
<keyword id="KW-0597">Phosphoprotein</keyword>
<keyword id="KW-0808">Transferase</keyword>
<accession>B2SZQ7</accession>
<feature type="chain" id="PRO_1000120501" description="Polyphosphate kinase">
    <location>
        <begin position="1"/>
        <end position="687"/>
    </location>
</feature>
<feature type="active site" description="Phosphohistidine intermediate" evidence="1">
    <location>
        <position position="435"/>
    </location>
</feature>
<feature type="binding site" evidence="1">
    <location>
        <position position="45"/>
    </location>
    <ligand>
        <name>ATP</name>
        <dbReference type="ChEBI" id="CHEBI:30616"/>
    </ligand>
</feature>
<feature type="binding site" evidence="1">
    <location>
        <position position="375"/>
    </location>
    <ligand>
        <name>Mg(2+)</name>
        <dbReference type="ChEBI" id="CHEBI:18420"/>
    </ligand>
</feature>
<feature type="binding site" evidence="1">
    <location>
        <position position="405"/>
    </location>
    <ligand>
        <name>Mg(2+)</name>
        <dbReference type="ChEBI" id="CHEBI:18420"/>
    </ligand>
</feature>
<feature type="binding site" evidence="1">
    <location>
        <position position="472"/>
    </location>
    <ligand>
        <name>ATP</name>
        <dbReference type="ChEBI" id="CHEBI:30616"/>
    </ligand>
</feature>
<feature type="binding site" evidence="1">
    <location>
        <position position="568"/>
    </location>
    <ligand>
        <name>ATP</name>
        <dbReference type="ChEBI" id="CHEBI:30616"/>
    </ligand>
</feature>
<feature type="binding site" evidence="1">
    <location>
        <position position="596"/>
    </location>
    <ligand>
        <name>ATP</name>
        <dbReference type="ChEBI" id="CHEBI:30616"/>
    </ligand>
</feature>
<proteinExistence type="inferred from homology"/>
<dbReference type="EC" id="2.7.4.1" evidence="1"/>
<dbReference type="EMBL" id="CP001052">
    <property type="protein sequence ID" value="ACD17245.1"/>
    <property type="molecule type" value="Genomic_DNA"/>
</dbReference>
<dbReference type="RefSeq" id="WP_012433832.1">
    <property type="nucleotide sequence ID" value="NC_010681.1"/>
</dbReference>
<dbReference type="SMR" id="B2SZQ7"/>
<dbReference type="STRING" id="398527.Bphyt_2851"/>
<dbReference type="KEGG" id="bpy:Bphyt_2851"/>
<dbReference type="eggNOG" id="COG0855">
    <property type="taxonomic scope" value="Bacteria"/>
</dbReference>
<dbReference type="HOGENOM" id="CLU_009678_5_0_4"/>
<dbReference type="OrthoDB" id="9761456at2"/>
<dbReference type="Proteomes" id="UP000001739">
    <property type="component" value="Chromosome 1"/>
</dbReference>
<dbReference type="GO" id="GO:0009358">
    <property type="term" value="C:polyphosphate kinase complex"/>
    <property type="evidence" value="ECO:0007669"/>
    <property type="project" value="InterPro"/>
</dbReference>
<dbReference type="GO" id="GO:0005524">
    <property type="term" value="F:ATP binding"/>
    <property type="evidence" value="ECO:0007669"/>
    <property type="project" value="UniProtKB-KW"/>
</dbReference>
<dbReference type="GO" id="GO:0046872">
    <property type="term" value="F:metal ion binding"/>
    <property type="evidence" value="ECO:0007669"/>
    <property type="project" value="UniProtKB-KW"/>
</dbReference>
<dbReference type="GO" id="GO:0008976">
    <property type="term" value="F:polyphosphate kinase activity"/>
    <property type="evidence" value="ECO:0007669"/>
    <property type="project" value="UniProtKB-UniRule"/>
</dbReference>
<dbReference type="GO" id="GO:0006799">
    <property type="term" value="P:polyphosphate biosynthetic process"/>
    <property type="evidence" value="ECO:0007669"/>
    <property type="project" value="UniProtKB-UniRule"/>
</dbReference>
<dbReference type="CDD" id="cd09165">
    <property type="entry name" value="PLDc_PaPPK1_C1_like"/>
    <property type="match status" value="1"/>
</dbReference>
<dbReference type="CDD" id="cd09168">
    <property type="entry name" value="PLDc_PaPPK1_C2_like"/>
    <property type="match status" value="1"/>
</dbReference>
<dbReference type="Gene3D" id="3.30.870.10">
    <property type="entry name" value="Endonuclease Chain A"/>
    <property type="match status" value="2"/>
</dbReference>
<dbReference type="Gene3D" id="3.30.1840.10">
    <property type="entry name" value="Polyphosphate kinase middle domain"/>
    <property type="match status" value="1"/>
</dbReference>
<dbReference type="Gene3D" id="1.20.58.310">
    <property type="entry name" value="Polyphosphate kinase N-terminal domain"/>
    <property type="match status" value="1"/>
</dbReference>
<dbReference type="HAMAP" id="MF_00347">
    <property type="entry name" value="Polyphosphate_kinase"/>
    <property type="match status" value="1"/>
</dbReference>
<dbReference type="InterPro" id="IPR003414">
    <property type="entry name" value="PP_kinase"/>
</dbReference>
<dbReference type="InterPro" id="IPR041108">
    <property type="entry name" value="PP_kinase_C_1"/>
</dbReference>
<dbReference type="InterPro" id="IPR024953">
    <property type="entry name" value="PP_kinase_middle"/>
</dbReference>
<dbReference type="InterPro" id="IPR036830">
    <property type="entry name" value="PP_kinase_middle_dom_sf"/>
</dbReference>
<dbReference type="InterPro" id="IPR025200">
    <property type="entry name" value="PPK_C_dom2"/>
</dbReference>
<dbReference type="InterPro" id="IPR025198">
    <property type="entry name" value="PPK_N_dom"/>
</dbReference>
<dbReference type="InterPro" id="IPR036832">
    <property type="entry name" value="PPK_N_dom_sf"/>
</dbReference>
<dbReference type="NCBIfam" id="TIGR03705">
    <property type="entry name" value="poly_P_kin"/>
    <property type="match status" value="1"/>
</dbReference>
<dbReference type="NCBIfam" id="NF003917">
    <property type="entry name" value="PRK05443.1-1"/>
    <property type="match status" value="1"/>
</dbReference>
<dbReference type="NCBIfam" id="NF003918">
    <property type="entry name" value="PRK05443.1-2"/>
    <property type="match status" value="1"/>
</dbReference>
<dbReference type="NCBIfam" id="NF003921">
    <property type="entry name" value="PRK05443.2-2"/>
    <property type="match status" value="1"/>
</dbReference>
<dbReference type="PANTHER" id="PTHR30218">
    <property type="entry name" value="POLYPHOSPHATE KINASE"/>
    <property type="match status" value="1"/>
</dbReference>
<dbReference type="PANTHER" id="PTHR30218:SF0">
    <property type="entry name" value="POLYPHOSPHATE KINASE"/>
    <property type="match status" value="1"/>
</dbReference>
<dbReference type="Pfam" id="PF02503">
    <property type="entry name" value="PP_kinase"/>
    <property type="match status" value="1"/>
</dbReference>
<dbReference type="Pfam" id="PF13090">
    <property type="entry name" value="PP_kinase_C"/>
    <property type="match status" value="1"/>
</dbReference>
<dbReference type="Pfam" id="PF17941">
    <property type="entry name" value="PP_kinase_C_1"/>
    <property type="match status" value="1"/>
</dbReference>
<dbReference type="Pfam" id="PF13089">
    <property type="entry name" value="PP_kinase_N"/>
    <property type="match status" value="1"/>
</dbReference>
<dbReference type="PIRSF" id="PIRSF015589">
    <property type="entry name" value="PP_kinase"/>
    <property type="match status" value="1"/>
</dbReference>
<dbReference type="SUPFAM" id="SSF56024">
    <property type="entry name" value="Phospholipase D/nuclease"/>
    <property type="match status" value="2"/>
</dbReference>
<dbReference type="SUPFAM" id="SSF143724">
    <property type="entry name" value="PHP14-like"/>
    <property type="match status" value="1"/>
</dbReference>
<dbReference type="SUPFAM" id="SSF140356">
    <property type="entry name" value="PPK N-terminal domain-like"/>
    <property type="match status" value="1"/>
</dbReference>
<protein>
    <recommendedName>
        <fullName evidence="1">Polyphosphate kinase</fullName>
        <ecNumber evidence="1">2.7.4.1</ecNumber>
    </recommendedName>
    <alternativeName>
        <fullName evidence="1">ATP-polyphosphate phosphotransferase</fullName>
    </alternativeName>
    <alternativeName>
        <fullName evidence="1">Polyphosphoric acid kinase</fullName>
    </alternativeName>
</protein>
<organism>
    <name type="scientific">Paraburkholderia phytofirmans (strain DSM 17436 / LMG 22146 / PsJN)</name>
    <name type="common">Burkholderia phytofirmans</name>
    <dbReference type="NCBI Taxonomy" id="398527"/>
    <lineage>
        <taxon>Bacteria</taxon>
        <taxon>Pseudomonadati</taxon>
        <taxon>Pseudomonadota</taxon>
        <taxon>Betaproteobacteria</taxon>
        <taxon>Burkholderiales</taxon>
        <taxon>Burkholderiaceae</taxon>
        <taxon>Paraburkholderia</taxon>
    </lineage>
</organism>
<comment type="function">
    <text evidence="1">Catalyzes the reversible transfer of the terminal phosphate of ATP to form a long-chain polyphosphate (polyP).</text>
</comment>
<comment type="catalytic activity">
    <reaction evidence="1">
        <text>[phosphate](n) + ATP = [phosphate](n+1) + ADP</text>
        <dbReference type="Rhea" id="RHEA:19573"/>
        <dbReference type="Rhea" id="RHEA-COMP:9859"/>
        <dbReference type="Rhea" id="RHEA-COMP:14280"/>
        <dbReference type="ChEBI" id="CHEBI:16838"/>
        <dbReference type="ChEBI" id="CHEBI:30616"/>
        <dbReference type="ChEBI" id="CHEBI:456216"/>
        <dbReference type="EC" id="2.7.4.1"/>
    </reaction>
</comment>
<comment type="cofactor">
    <cofactor evidence="1">
        <name>Mg(2+)</name>
        <dbReference type="ChEBI" id="CHEBI:18420"/>
    </cofactor>
</comment>
<comment type="PTM">
    <text evidence="1">An intermediate of this reaction is the autophosphorylated ppk in which a phosphate is covalently linked to a histidine residue through a N-P bond.</text>
</comment>
<comment type="similarity">
    <text evidence="1">Belongs to the polyphosphate kinase 1 (PPK1) family.</text>
</comment>